<keyword id="KW-0067">ATP-binding</keyword>
<keyword id="KW-0119">Carbohydrate metabolism</keyword>
<keyword id="KW-0418">Kinase</keyword>
<keyword id="KW-0547">Nucleotide-binding</keyword>
<keyword id="KW-1185">Reference proteome</keyword>
<keyword id="KW-0808">Transferase</keyword>
<evidence type="ECO:0000255" key="1">
    <source>
        <dbReference type="HAMAP-Rule" id="MF_01270"/>
    </source>
</evidence>
<name>ANMK_ACAM1</name>
<protein>
    <recommendedName>
        <fullName evidence="1">Anhydro-N-acetylmuramic acid kinase</fullName>
        <ecNumber evidence="1">2.7.1.170</ecNumber>
    </recommendedName>
    <alternativeName>
        <fullName evidence="1">AnhMurNAc kinase</fullName>
    </alternativeName>
</protein>
<organism>
    <name type="scientific">Acaryochloris marina (strain MBIC 11017)</name>
    <dbReference type="NCBI Taxonomy" id="329726"/>
    <lineage>
        <taxon>Bacteria</taxon>
        <taxon>Bacillati</taxon>
        <taxon>Cyanobacteriota</taxon>
        <taxon>Cyanophyceae</taxon>
        <taxon>Acaryochloridales</taxon>
        <taxon>Acaryochloridaceae</taxon>
        <taxon>Acaryochloris</taxon>
    </lineage>
</organism>
<gene>
    <name evidence="1" type="primary">anmK</name>
    <name type="ordered locus">AM1_2840</name>
</gene>
<feature type="chain" id="PRO_1000214151" description="Anhydro-N-acetylmuramic acid kinase">
    <location>
        <begin position="1"/>
        <end position="379"/>
    </location>
</feature>
<feature type="binding site" evidence="1">
    <location>
        <begin position="9"/>
        <end position="16"/>
    </location>
    <ligand>
        <name>ATP</name>
        <dbReference type="ChEBI" id="CHEBI:30616"/>
    </ligand>
</feature>
<proteinExistence type="inferred from homology"/>
<reference key="1">
    <citation type="journal article" date="2008" name="Proc. Natl. Acad. Sci. U.S.A.">
        <title>Niche adaptation and genome expansion in the chlorophyll d-producing cyanobacterium Acaryochloris marina.</title>
        <authorList>
            <person name="Swingley W.D."/>
            <person name="Chen M."/>
            <person name="Cheung P.C."/>
            <person name="Conrad A.L."/>
            <person name="Dejesa L.C."/>
            <person name="Hao J."/>
            <person name="Honchak B.M."/>
            <person name="Karbach L.E."/>
            <person name="Kurdoglu A."/>
            <person name="Lahiri S."/>
            <person name="Mastrian S.D."/>
            <person name="Miyashita H."/>
            <person name="Page L."/>
            <person name="Ramakrishna P."/>
            <person name="Satoh S."/>
            <person name="Sattley W.M."/>
            <person name="Shimada Y."/>
            <person name="Taylor H.L."/>
            <person name="Tomo T."/>
            <person name="Tsuchiya T."/>
            <person name="Wang Z.T."/>
            <person name="Raymond J."/>
            <person name="Mimuro M."/>
            <person name="Blankenship R.E."/>
            <person name="Touchman J.W."/>
        </authorList>
    </citation>
    <scope>NUCLEOTIDE SEQUENCE [LARGE SCALE GENOMIC DNA]</scope>
    <source>
        <strain>MBIC 11017</strain>
    </source>
</reference>
<comment type="function">
    <text evidence="1">Catalyzes the specific phosphorylation of 1,6-anhydro-N-acetylmuramic acid (anhMurNAc) with the simultaneous cleavage of the 1,6-anhydro ring, generating MurNAc-6-P. Is required for the utilization of anhMurNAc either imported from the medium or derived from its own cell wall murein, and thus plays a role in cell wall recycling.</text>
</comment>
<comment type="catalytic activity">
    <reaction evidence="1">
        <text>1,6-anhydro-N-acetyl-beta-muramate + ATP + H2O = N-acetyl-D-muramate 6-phosphate + ADP + H(+)</text>
        <dbReference type="Rhea" id="RHEA:24952"/>
        <dbReference type="ChEBI" id="CHEBI:15377"/>
        <dbReference type="ChEBI" id="CHEBI:15378"/>
        <dbReference type="ChEBI" id="CHEBI:30616"/>
        <dbReference type="ChEBI" id="CHEBI:58690"/>
        <dbReference type="ChEBI" id="CHEBI:58722"/>
        <dbReference type="ChEBI" id="CHEBI:456216"/>
        <dbReference type="EC" id="2.7.1.170"/>
    </reaction>
</comment>
<comment type="pathway">
    <text evidence="1">Amino-sugar metabolism; 1,6-anhydro-N-acetylmuramate degradation.</text>
</comment>
<comment type="pathway">
    <text evidence="1">Cell wall biogenesis; peptidoglycan recycling.</text>
</comment>
<comment type="similarity">
    <text evidence="1">Belongs to the anhydro-N-acetylmuramic acid kinase family.</text>
</comment>
<accession>B0CAA5</accession>
<sequence>MHVIGLMSGTSVDGIDAALVEISGRELDLQVDLIAAQTYPYPDALRNQILAVCRGEPLSIEALAGLDDAIAMQFAQAAQSIQAEATLTAELIGSHGQTVFHRPPQGNLGYTLQIGRGAVIAHQTGINTVSNFRVADMAAGGQGAPLVSKLDICLLSHPEFYRCVQNIGGIGNVTYLPPLTDASQLGMGVKGWDTGPGNVLMDLAVAHFSKGELTYDADGAWAAQGNPCQPLIEEWLRHPFFQAPPPKSTGRELFSPDYLQTCLQTAASYQLSPADMLATLTDFTAATIVYNYDQFLPHPPDQVVLCGGGSRNGYLRQCLQQRLGGSTVLTTDDVGLNSDAKEAIAFAVLAYWQQLQIPGNVPAVTGASGPILLGELHLV</sequence>
<dbReference type="EC" id="2.7.1.170" evidence="1"/>
<dbReference type="EMBL" id="CP000828">
    <property type="protein sequence ID" value="ABW27840.1"/>
    <property type="molecule type" value="Genomic_DNA"/>
</dbReference>
<dbReference type="RefSeq" id="WP_012163284.1">
    <property type="nucleotide sequence ID" value="NC_009925.1"/>
</dbReference>
<dbReference type="SMR" id="B0CAA5"/>
<dbReference type="STRING" id="329726.AM1_2840"/>
<dbReference type="KEGG" id="amr:AM1_2840"/>
<dbReference type="eggNOG" id="COG2377">
    <property type="taxonomic scope" value="Bacteria"/>
</dbReference>
<dbReference type="HOGENOM" id="CLU_038782_1_0_3"/>
<dbReference type="OrthoDB" id="9763949at2"/>
<dbReference type="UniPathway" id="UPA00343"/>
<dbReference type="UniPathway" id="UPA00544"/>
<dbReference type="Proteomes" id="UP000000268">
    <property type="component" value="Chromosome"/>
</dbReference>
<dbReference type="GO" id="GO:0005524">
    <property type="term" value="F:ATP binding"/>
    <property type="evidence" value="ECO:0007669"/>
    <property type="project" value="UniProtKB-UniRule"/>
</dbReference>
<dbReference type="GO" id="GO:0016301">
    <property type="term" value="F:kinase activity"/>
    <property type="evidence" value="ECO:0007669"/>
    <property type="project" value="UniProtKB-KW"/>
</dbReference>
<dbReference type="GO" id="GO:0016773">
    <property type="term" value="F:phosphotransferase activity, alcohol group as acceptor"/>
    <property type="evidence" value="ECO:0007669"/>
    <property type="project" value="UniProtKB-UniRule"/>
</dbReference>
<dbReference type="GO" id="GO:0097175">
    <property type="term" value="P:1,6-anhydro-N-acetyl-beta-muramic acid catabolic process"/>
    <property type="evidence" value="ECO:0007669"/>
    <property type="project" value="UniProtKB-UniRule"/>
</dbReference>
<dbReference type="GO" id="GO:0006040">
    <property type="term" value="P:amino sugar metabolic process"/>
    <property type="evidence" value="ECO:0007669"/>
    <property type="project" value="InterPro"/>
</dbReference>
<dbReference type="GO" id="GO:0009254">
    <property type="term" value="P:peptidoglycan turnover"/>
    <property type="evidence" value="ECO:0007669"/>
    <property type="project" value="UniProtKB-UniRule"/>
</dbReference>
<dbReference type="CDD" id="cd24050">
    <property type="entry name" value="ASKHA_NBD_ANMK"/>
    <property type="match status" value="1"/>
</dbReference>
<dbReference type="Gene3D" id="3.30.420.40">
    <property type="match status" value="2"/>
</dbReference>
<dbReference type="HAMAP" id="MF_01270">
    <property type="entry name" value="AnhMurNAc_kinase"/>
    <property type="match status" value="1"/>
</dbReference>
<dbReference type="InterPro" id="IPR005338">
    <property type="entry name" value="Anhydro_N_Ac-Mur_kinase"/>
</dbReference>
<dbReference type="InterPro" id="IPR043129">
    <property type="entry name" value="ATPase_NBD"/>
</dbReference>
<dbReference type="NCBIfam" id="NF007139">
    <property type="entry name" value="PRK09585.1-3"/>
    <property type="match status" value="1"/>
</dbReference>
<dbReference type="NCBIfam" id="NF007143">
    <property type="entry name" value="PRK09585.2-2"/>
    <property type="match status" value="1"/>
</dbReference>
<dbReference type="NCBIfam" id="NF007148">
    <property type="entry name" value="PRK09585.3-2"/>
    <property type="match status" value="1"/>
</dbReference>
<dbReference type="PANTHER" id="PTHR30605">
    <property type="entry name" value="ANHYDRO-N-ACETYLMURAMIC ACID KINASE"/>
    <property type="match status" value="1"/>
</dbReference>
<dbReference type="PANTHER" id="PTHR30605:SF0">
    <property type="entry name" value="ANHYDRO-N-ACETYLMURAMIC ACID KINASE"/>
    <property type="match status" value="1"/>
</dbReference>
<dbReference type="Pfam" id="PF03702">
    <property type="entry name" value="AnmK"/>
    <property type="match status" value="1"/>
</dbReference>
<dbReference type="SUPFAM" id="SSF53067">
    <property type="entry name" value="Actin-like ATPase domain"/>
    <property type="match status" value="1"/>
</dbReference>